<keyword id="KW-0450">Lipoyl</keyword>
<evidence type="ECO:0000255" key="1">
    <source>
        <dbReference type="HAMAP-Rule" id="MF_00272"/>
    </source>
</evidence>
<evidence type="ECO:0000255" key="2">
    <source>
        <dbReference type="PROSITE-ProRule" id="PRU01066"/>
    </source>
</evidence>
<reference key="1">
    <citation type="journal article" date="2008" name="J. Bacteriol.">
        <title>Genome sequence of Staphylococcus aureus strain Newman and comparative analysis of staphylococcal genomes: polymorphism and evolution of two major pathogenicity islands.</title>
        <authorList>
            <person name="Baba T."/>
            <person name="Bae T."/>
            <person name="Schneewind O."/>
            <person name="Takeuchi F."/>
            <person name="Hiramatsu K."/>
        </authorList>
    </citation>
    <scope>NUCLEOTIDE SEQUENCE [LARGE SCALE GENOMIC DNA]</scope>
    <source>
        <strain>Newman</strain>
    </source>
</reference>
<name>GCSH_STAAE</name>
<gene>
    <name evidence="1" type="primary">gcvH</name>
    <name type="ordered locus">NWMN_0776</name>
</gene>
<accession>A6QFB6</accession>
<comment type="function">
    <text evidence="1">The glycine cleavage system catalyzes the degradation of glycine. The H protein shuttles the methylamine group of glycine from the P protein to the T protein.</text>
</comment>
<comment type="function">
    <text evidence="1">Is also involved in protein lipoylation via its role as an octanoyl/lipoyl carrier protein intermediate.</text>
</comment>
<comment type="cofactor">
    <cofactor evidence="1">
        <name>(R)-lipoate</name>
        <dbReference type="ChEBI" id="CHEBI:83088"/>
    </cofactor>
    <text evidence="1">Binds 1 lipoyl cofactor covalently.</text>
</comment>
<comment type="subunit">
    <text evidence="1">The glycine cleavage system is composed of four proteins: P, T, L and H.</text>
</comment>
<comment type="similarity">
    <text evidence="1">Belongs to the GcvH family.</text>
</comment>
<feature type="chain" id="PRO_1000071906" description="Glycine cleavage system H protein">
    <location>
        <begin position="1"/>
        <end position="126"/>
    </location>
</feature>
<feature type="domain" description="Lipoyl-binding" evidence="2">
    <location>
        <begin position="22"/>
        <end position="104"/>
    </location>
</feature>
<feature type="modified residue" description="N6-lipoyllysine" evidence="1">
    <location>
        <position position="63"/>
    </location>
</feature>
<organism>
    <name type="scientific">Staphylococcus aureus (strain Newman)</name>
    <dbReference type="NCBI Taxonomy" id="426430"/>
    <lineage>
        <taxon>Bacteria</taxon>
        <taxon>Bacillati</taxon>
        <taxon>Bacillota</taxon>
        <taxon>Bacilli</taxon>
        <taxon>Bacillales</taxon>
        <taxon>Staphylococcaceae</taxon>
        <taxon>Staphylococcus</taxon>
    </lineage>
</organism>
<dbReference type="EMBL" id="AP009351">
    <property type="protein sequence ID" value="BAF67048.1"/>
    <property type="molecule type" value="Genomic_DNA"/>
</dbReference>
<dbReference type="RefSeq" id="WP_000290485.1">
    <property type="nucleotide sequence ID" value="NZ_JBBIAE010000002.1"/>
</dbReference>
<dbReference type="SMR" id="A6QFB6"/>
<dbReference type="KEGG" id="sae:NWMN_0776"/>
<dbReference type="HOGENOM" id="CLU_097408_2_2_9"/>
<dbReference type="Proteomes" id="UP000006386">
    <property type="component" value="Chromosome"/>
</dbReference>
<dbReference type="GO" id="GO:0005829">
    <property type="term" value="C:cytosol"/>
    <property type="evidence" value="ECO:0007669"/>
    <property type="project" value="TreeGrafter"/>
</dbReference>
<dbReference type="GO" id="GO:0005960">
    <property type="term" value="C:glycine cleavage complex"/>
    <property type="evidence" value="ECO:0007669"/>
    <property type="project" value="InterPro"/>
</dbReference>
<dbReference type="GO" id="GO:0019464">
    <property type="term" value="P:glycine decarboxylation via glycine cleavage system"/>
    <property type="evidence" value="ECO:0007669"/>
    <property type="project" value="UniProtKB-UniRule"/>
</dbReference>
<dbReference type="CDD" id="cd06848">
    <property type="entry name" value="GCS_H"/>
    <property type="match status" value="1"/>
</dbReference>
<dbReference type="Gene3D" id="2.40.50.100">
    <property type="match status" value="1"/>
</dbReference>
<dbReference type="HAMAP" id="MF_00272">
    <property type="entry name" value="GcvH"/>
    <property type="match status" value="1"/>
</dbReference>
<dbReference type="InterPro" id="IPR003016">
    <property type="entry name" value="2-oxoA_DH_lipoyl-BS"/>
</dbReference>
<dbReference type="InterPro" id="IPR000089">
    <property type="entry name" value="Biotin_lipoyl"/>
</dbReference>
<dbReference type="InterPro" id="IPR002930">
    <property type="entry name" value="GCV_H"/>
</dbReference>
<dbReference type="InterPro" id="IPR033753">
    <property type="entry name" value="GCV_H/Fam206"/>
</dbReference>
<dbReference type="InterPro" id="IPR017453">
    <property type="entry name" value="GCV_H_sub"/>
</dbReference>
<dbReference type="InterPro" id="IPR011053">
    <property type="entry name" value="Single_hybrid_motif"/>
</dbReference>
<dbReference type="NCBIfam" id="TIGR00527">
    <property type="entry name" value="gcvH"/>
    <property type="match status" value="1"/>
</dbReference>
<dbReference type="NCBIfam" id="NF002270">
    <property type="entry name" value="PRK01202.1"/>
    <property type="match status" value="1"/>
</dbReference>
<dbReference type="PANTHER" id="PTHR11715">
    <property type="entry name" value="GLYCINE CLEAVAGE SYSTEM H PROTEIN"/>
    <property type="match status" value="1"/>
</dbReference>
<dbReference type="PANTHER" id="PTHR11715:SF3">
    <property type="entry name" value="GLYCINE CLEAVAGE SYSTEM H PROTEIN-RELATED"/>
    <property type="match status" value="1"/>
</dbReference>
<dbReference type="Pfam" id="PF01597">
    <property type="entry name" value="GCV_H"/>
    <property type="match status" value="1"/>
</dbReference>
<dbReference type="SUPFAM" id="SSF51230">
    <property type="entry name" value="Single hybrid motif"/>
    <property type="match status" value="1"/>
</dbReference>
<dbReference type="PROSITE" id="PS50968">
    <property type="entry name" value="BIOTINYL_LIPOYL"/>
    <property type="match status" value="1"/>
</dbReference>
<dbReference type="PROSITE" id="PS00189">
    <property type="entry name" value="LIPOYL"/>
    <property type="match status" value="1"/>
</dbReference>
<sequence>MAVPNELKYSKEHEWVKVEGNVAIIGITEYAQSELGDIVFVELPETDDEINEGDTFGSVESVKTVSELYAPISGKVVEVNEELEDSPEFVNESPYEKAWMVKVEISDESQIEALLTAEKYSEMIGE</sequence>
<protein>
    <recommendedName>
        <fullName evidence="1">Glycine cleavage system H protein</fullName>
    </recommendedName>
    <alternativeName>
        <fullName evidence="1">Octanoyl/lipoyl carrier protein</fullName>
    </alternativeName>
</protein>
<proteinExistence type="inferred from homology"/>